<gene>
    <name evidence="1" type="primary">alaS</name>
    <name type="ordered locus">mlr0032</name>
</gene>
<sequence length="888" mass="95720">MSGVNEIRSTFLDYFRKEGHEVVASSPLVPRNDPTLMFTNAGMVQFKNVFTGLEKRSYSRATTAQKSVRAGGKHNDLDNVGYTARHLTFFEMLGNFSFGDYFKERAIELAWNLITKEFGLKKDKLLVTVYHTDDEAAGFWKKIAGFSDDRIIRIATSDNFWAMGDTGPCGPCSEIFIDRGEHVWGGPPGSPEEDGDRFLEFWNLVFMQYEQVTKEERIDLPRPSIDTGMGLERMASILQGVESVFETDLFRHLIDAASSALGRAPDAETVASYRVIADHLRSSSFLVADGVLPSNEGRGYVLRRIMRRAMRHAQLLGANEPLMWKLVPALVREMGQAYPELLRGEQLVTETLKLEETRFRKTLVRGLGLLSEATETLHAGDMLDGETAFKLYDTYGFPLDLTQDALRQRNISVDLAGFTNAMEQQKAEARKHWTGSGEAATETVWFSVREQTGATEFLGYETEQAEGLIQALVKDGKTVDSAGKGDAVAVVVNQTPFYGESGGQMGDTGIISGEGFSIEISDTQKKADGLFVHLGKVASGTVKTGAAVELKVDHARRTRLRANHSATHLIHEALREVLGTHVAQKGSLVAPERLRFDISHNKPISAEELEEVERMANEIVVQNSPVTTRLMSVDDAIAEGAMALFGEKYGDEVRVVSMGTGLHGAKANRPYSVELCGGTHVRATGDIGLVRVVSDSAVAAGVRRIEALTGEAARKHLDEQDRRLKAAAATLKISPADVPARVEALLEERKKLEKDLTEARKKLALGGGAAAGAPSENETVAGVGFLGKAVSGVSPKDLKPLADAGKSSLGSGVVVFVGADEDNKASVVVAVTDDLVGRFSAVDLVRVASAALGGQGGGGRPDMAQAGGPDASKANDAIAAVKAALEAA</sequence>
<proteinExistence type="inferred from homology"/>
<feature type="chain" id="PRO_0000075186" description="Alanine--tRNA ligase">
    <location>
        <begin position="1"/>
        <end position="888"/>
    </location>
</feature>
<feature type="binding site" evidence="1">
    <location>
        <position position="564"/>
    </location>
    <ligand>
        <name>Zn(2+)</name>
        <dbReference type="ChEBI" id="CHEBI:29105"/>
    </ligand>
</feature>
<feature type="binding site" evidence="1">
    <location>
        <position position="568"/>
    </location>
    <ligand>
        <name>Zn(2+)</name>
        <dbReference type="ChEBI" id="CHEBI:29105"/>
    </ligand>
</feature>
<feature type="binding site" evidence="1">
    <location>
        <position position="676"/>
    </location>
    <ligand>
        <name>Zn(2+)</name>
        <dbReference type="ChEBI" id="CHEBI:29105"/>
    </ligand>
</feature>
<feature type="binding site" evidence="1">
    <location>
        <position position="680"/>
    </location>
    <ligand>
        <name>Zn(2+)</name>
        <dbReference type="ChEBI" id="CHEBI:29105"/>
    </ligand>
</feature>
<reference key="1">
    <citation type="journal article" date="2000" name="DNA Res.">
        <title>Complete genome structure of the nitrogen-fixing symbiotic bacterium Mesorhizobium loti.</title>
        <authorList>
            <person name="Kaneko T."/>
            <person name="Nakamura Y."/>
            <person name="Sato S."/>
            <person name="Asamizu E."/>
            <person name="Kato T."/>
            <person name="Sasamoto S."/>
            <person name="Watanabe A."/>
            <person name="Idesawa K."/>
            <person name="Ishikawa A."/>
            <person name="Kawashima K."/>
            <person name="Kimura T."/>
            <person name="Kishida Y."/>
            <person name="Kiyokawa C."/>
            <person name="Kohara M."/>
            <person name="Matsumoto M."/>
            <person name="Matsuno A."/>
            <person name="Mochizuki Y."/>
            <person name="Nakayama S."/>
            <person name="Nakazaki N."/>
            <person name="Shimpo S."/>
            <person name="Sugimoto M."/>
            <person name="Takeuchi C."/>
            <person name="Yamada M."/>
            <person name="Tabata S."/>
        </authorList>
    </citation>
    <scope>NUCLEOTIDE SEQUENCE [LARGE SCALE GENOMIC DNA]</scope>
    <source>
        <strain>LMG 29417 / CECT 9101 / MAFF 303099</strain>
    </source>
</reference>
<dbReference type="EC" id="6.1.1.7" evidence="1"/>
<dbReference type="EMBL" id="BA000012">
    <property type="protein sequence ID" value="BAB47706.1"/>
    <property type="molecule type" value="Genomic_DNA"/>
</dbReference>
<dbReference type="RefSeq" id="WP_010909076.1">
    <property type="nucleotide sequence ID" value="NC_002678.2"/>
</dbReference>
<dbReference type="SMR" id="Q98NQ5"/>
<dbReference type="KEGG" id="mlo:mlr0032"/>
<dbReference type="PATRIC" id="fig|266835.9.peg.27"/>
<dbReference type="eggNOG" id="COG0013">
    <property type="taxonomic scope" value="Bacteria"/>
</dbReference>
<dbReference type="HOGENOM" id="CLU_004485_1_1_5"/>
<dbReference type="Proteomes" id="UP000000552">
    <property type="component" value="Chromosome"/>
</dbReference>
<dbReference type="GO" id="GO:0005829">
    <property type="term" value="C:cytosol"/>
    <property type="evidence" value="ECO:0007669"/>
    <property type="project" value="TreeGrafter"/>
</dbReference>
<dbReference type="GO" id="GO:0004813">
    <property type="term" value="F:alanine-tRNA ligase activity"/>
    <property type="evidence" value="ECO:0007669"/>
    <property type="project" value="UniProtKB-UniRule"/>
</dbReference>
<dbReference type="GO" id="GO:0002161">
    <property type="term" value="F:aminoacyl-tRNA deacylase activity"/>
    <property type="evidence" value="ECO:0007669"/>
    <property type="project" value="TreeGrafter"/>
</dbReference>
<dbReference type="GO" id="GO:0005524">
    <property type="term" value="F:ATP binding"/>
    <property type="evidence" value="ECO:0007669"/>
    <property type="project" value="UniProtKB-UniRule"/>
</dbReference>
<dbReference type="GO" id="GO:0000049">
    <property type="term" value="F:tRNA binding"/>
    <property type="evidence" value="ECO:0007669"/>
    <property type="project" value="UniProtKB-KW"/>
</dbReference>
<dbReference type="GO" id="GO:0008270">
    <property type="term" value="F:zinc ion binding"/>
    <property type="evidence" value="ECO:0007669"/>
    <property type="project" value="UniProtKB-UniRule"/>
</dbReference>
<dbReference type="GO" id="GO:0006419">
    <property type="term" value="P:alanyl-tRNA aminoacylation"/>
    <property type="evidence" value="ECO:0007669"/>
    <property type="project" value="UniProtKB-UniRule"/>
</dbReference>
<dbReference type="GO" id="GO:0045892">
    <property type="term" value="P:negative regulation of DNA-templated transcription"/>
    <property type="evidence" value="ECO:0007669"/>
    <property type="project" value="TreeGrafter"/>
</dbReference>
<dbReference type="CDD" id="cd00673">
    <property type="entry name" value="AlaRS_core"/>
    <property type="match status" value="1"/>
</dbReference>
<dbReference type="FunFam" id="2.40.30.130:FF:000001">
    <property type="entry name" value="Alanine--tRNA ligase"/>
    <property type="match status" value="1"/>
</dbReference>
<dbReference type="FunFam" id="3.10.310.40:FF:000001">
    <property type="entry name" value="Alanine--tRNA ligase"/>
    <property type="match status" value="1"/>
</dbReference>
<dbReference type="FunFam" id="3.30.54.20:FF:000001">
    <property type="entry name" value="Alanine--tRNA ligase"/>
    <property type="match status" value="1"/>
</dbReference>
<dbReference type="FunFam" id="3.30.930.10:FF:000004">
    <property type="entry name" value="Alanine--tRNA ligase"/>
    <property type="match status" value="1"/>
</dbReference>
<dbReference type="FunFam" id="3.30.980.10:FF:000004">
    <property type="entry name" value="Alanine--tRNA ligase, cytoplasmic"/>
    <property type="match status" value="1"/>
</dbReference>
<dbReference type="Gene3D" id="2.40.30.130">
    <property type="match status" value="1"/>
</dbReference>
<dbReference type="Gene3D" id="3.10.310.40">
    <property type="match status" value="1"/>
</dbReference>
<dbReference type="Gene3D" id="3.30.54.20">
    <property type="match status" value="1"/>
</dbReference>
<dbReference type="Gene3D" id="6.10.250.550">
    <property type="match status" value="1"/>
</dbReference>
<dbReference type="Gene3D" id="3.30.930.10">
    <property type="entry name" value="Bira Bifunctional Protein, Domain 2"/>
    <property type="match status" value="1"/>
</dbReference>
<dbReference type="Gene3D" id="3.30.980.10">
    <property type="entry name" value="Threonyl-trna Synthetase, Chain A, domain 2"/>
    <property type="match status" value="1"/>
</dbReference>
<dbReference type="HAMAP" id="MF_00036_B">
    <property type="entry name" value="Ala_tRNA_synth_B"/>
    <property type="match status" value="1"/>
</dbReference>
<dbReference type="InterPro" id="IPR045864">
    <property type="entry name" value="aa-tRNA-synth_II/BPL/LPL"/>
</dbReference>
<dbReference type="InterPro" id="IPR002318">
    <property type="entry name" value="Ala-tRNA-lgiase_IIc"/>
</dbReference>
<dbReference type="InterPro" id="IPR018162">
    <property type="entry name" value="Ala-tRNA-ligase_IIc_anticod-bd"/>
</dbReference>
<dbReference type="InterPro" id="IPR018165">
    <property type="entry name" value="Ala-tRNA-synth_IIc_core"/>
</dbReference>
<dbReference type="InterPro" id="IPR018164">
    <property type="entry name" value="Ala-tRNA-synth_IIc_N"/>
</dbReference>
<dbReference type="InterPro" id="IPR050058">
    <property type="entry name" value="Ala-tRNA_ligase"/>
</dbReference>
<dbReference type="InterPro" id="IPR023033">
    <property type="entry name" value="Ala_tRNA_ligase_euk/bac"/>
</dbReference>
<dbReference type="InterPro" id="IPR003156">
    <property type="entry name" value="DHHA1_dom"/>
</dbReference>
<dbReference type="InterPro" id="IPR018163">
    <property type="entry name" value="Thr/Ala-tRNA-synth_IIc_edit"/>
</dbReference>
<dbReference type="InterPro" id="IPR009000">
    <property type="entry name" value="Transl_B-barrel_sf"/>
</dbReference>
<dbReference type="InterPro" id="IPR012947">
    <property type="entry name" value="tRNA_SAD"/>
</dbReference>
<dbReference type="NCBIfam" id="TIGR00344">
    <property type="entry name" value="alaS"/>
    <property type="match status" value="1"/>
</dbReference>
<dbReference type="PANTHER" id="PTHR11777:SF9">
    <property type="entry name" value="ALANINE--TRNA LIGASE, CYTOPLASMIC"/>
    <property type="match status" value="1"/>
</dbReference>
<dbReference type="PANTHER" id="PTHR11777">
    <property type="entry name" value="ALANYL-TRNA SYNTHETASE"/>
    <property type="match status" value="1"/>
</dbReference>
<dbReference type="Pfam" id="PF02272">
    <property type="entry name" value="DHHA1"/>
    <property type="match status" value="1"/>
</dbReference>
<dbReference type="Pfam" id="PF01411">
    <property type="entry name" value="tRNA-synt_2c"/>
    <property type="match status" value="1"/>
</dbReference>
<dbReference type="Pfam" id="PF07973">
    <property type="entry name" value="tRNA_SAD"/>
    <property type="match status" value="1"/>
</dbReference>
<dbReference type="PRINTS" id="PR00980">
    <property type="entry name" value="TRNASYNTHALA"/>
</dbReference>
<dbReference type="SMART" id="SM00863">
    <property type="entry name" value="tRNA_SAD"/>
    <property type="match status" value="1"/>
</dbReference>
<dbReference type="SUPFAM" id="SSF55681">
    <property type="entry name" value="Class II aaRS and biotin synthetases"/>
    <property type="match status" value="1"/>
</dbReference>
<dbReference type="SUPFAM" id="SSF101353">
    <property type="entry name" value="Putative anticodon-binding domain of alanyl-tRNA synthetase (AlaRS)"/>
    <property type="match status" value="1"/>
</dbReference>
<dbReference type="SUPFAM" id="SSF55186">
    <property type="entry name" value="ThrRS/AlaRS common domain"/>
    <property type="match status" value="1"/>
</dbReference>
<dbReference type="SUPFAM" id="SSF50447">
    <property type="entry name" value="Translation proteins"/>
    <property type="match status" value="1"/>
</dbReference>
<dbReference type="PROSITE" id="PS50860">
    <property type="entry name" value="AA_TRNA_LIGASE_II_ALA"/>
    <property type="match status" value="1"/>
</dbReference>
<name>SYA_RHILO</name>
<comment type="function">
    <text evidence="1">Catalyzes the attachment of alanine to tRNA(Ala) in a two-step reaction: alanine is first activated by ATP to form Ala-AMP and then transferred to the acceptor end of tRNA(Ala). Also edits incorrectly charged Ser-tRNA(Ala) and Gly-tRNA(Ala) via its editing domain.</text>
</comment>
<comment type="catalytic activity">
    <reaction evidence="1">
        <text>tRNA(Ala) + L-alanine + ATP = L-alanyl-tRNA(Ala) + AMP + diphosphate</text>
        <dbReference type="Rhea" id="RHEA:12540"/>
        <dbReference type="Rhea" id="RHEA-COMP:9657"/>
        <dbReference type="Rhea" id="RHEA-COMP:9923"/>
        <dbReference type="ChEBI" id="CHEBI:30616"/>
        <dbReference type="ChEBI" id="CHEBI:33019"/>
        <dbReference type="ChEBI" id="CHEBI:57972"/>
        <dbReference type="ChEBI" id="CHEBI:78442"/>
        <dbReference type="ChEBI" id="CHEBI:78497"/>
        <dbReference type="ChEBI" id="CHEBI:456215"/>
        <dbReference type="EC" id="6.1.1.7"/>
    </reaction>
</comment>
<comment type="cofactor">
    <cofactor evidence="1">
        <name>Zn(2+)</name>
        <dbReference type="ChEBI" id="CHEBI:29105"/>
    </cofactor>
    <text evidence="1">Binds 1 zinc ion per subunit.</text>
</comment>
<comment type="subcellular location">
    <subcellularLocation>
        <location evidence="1">Cytoplasm</location>
    </subcellularLocation>
</comment>
<comment type="domain">
    <text evidence="1">Consists of three domains; the N-terminal catalytic domain, the editing domain and the C-terminal C-Ala domain. The editing domain removes incorrectly charged amino acids, while the C-Ala domain, along with tRNA(Ala), serves as a bridge to cooperatively bring together the editing and aminoacylation centers thus stimulating deacylation of misacylated tRNAs.</text>
</comment>
<comment type="similarity">
    <text evidence="1">Belongs to the class-II aminoacyl-tRNA synthetase family.</text>
</comment>
<keyword id="KW-0030">Aminoacyl-tRNA synthetase</keyword>
<keyword id="KW-0067">ATP-binding</keyword>
<keyword id="KW-0963">Cytoplasm</keyword>
<keyword id="KW-0436">Ligase</keyword>
<keyword id="KW-0479">Metal-binding</keyword>
<keyword id="KW-0547">Nucleotide-binding</keyword>
<keyword id="KW-0648">Protein biosynthesis</keyword>
<keyword id="KW-0694">RNA-binding</keyword>
<keyword id="KW-0820">tRNA-binding</keyword>
<keyword id="KW-0862">Zinc</keyword>
<evidence type="ECO:0000255" key="1">
    <source>
        <dbReference type="HAMAP-Rule" id="MF_00036"/>
    </source>
</evidence>
<protein>
    <recommendedName>
        <fullName evidence="1">Alanine--tRNA ligase</fullName>
        <ecNumber evidence="1">6.1.1.7</ecNumber>
    </recommendedName>
    <alternativeName>
        <fullName evidence="1">Alanyl-tRNA synthetase</fullName>
        <shortName evidence="1">AlaRS</shortName>
    </alternativeName>
</protein>
<organism>
    <name type="scientific">Mesorhizobium japonicum (strain LMG 29417 / CECT 9101 / MAFF 303099)</name>
    <name type="common">Mesorhizobium loti (strain MAFF 303099)</name>
    <dbReference type="NCBI Taxonomy" id="266835"/>
    <lineage>
        <taxon>Bacteria</taxon>
        <taxon>Pseudomonadati</taxon>
        <taxon>Pseudomonadota</taxon>
        <taxon>Alphaproteobacteria</taxon>
        <taxon>Hyphomicrobiales</taxon>
        <taxon>Phyllobacteriaceae</taxon>
        <taxon>Mesorhizobium</taxon>
    </lineage>
</organism>
<accession>Q98NQ5</accession>